<sequence length="203" mass="22086">MIGRLRGIIIEKQPPLVLIEVGGVGYEVHMPMTCFYELPEAGQEAIVFTHFVVREDAQLLYGFNNKQERTLFKELIKTNGVGPKLALAILSGMSAQQFVNAVEREEVGALVKLPGIGKKTAERLIVEMKDRFKGLHGDLFTPAADLVLTSPASPATDDAEQEAVAALVALGYKPQEASRMVSKIARPDASSETLIREALRAAL</sequence>
<accession>B1LD10</accession>
<feature type="chain" id="PRO_1000195140" description="Holliday junction branch migration complex subunit RuvA">
    <location>
        <begin position="1"/>
        <end position="203"/>
    </location>
</feature>
<feature type="region of interest" description="Domain I" evidence="1">
    <location>
        <begin position="1"/>
        <end position="64"/>
    </location>
</feature>
<feature type="region of interest" description="Domain II" evidence="1">
    <location>
        <begin position="65"/>
        <end position="142"/>
    </location>
</feature>
<feature type="region of interest" description="Flexible linker" evidence="1">
    <location>
        <begin position="143"/>
        <end position="154"/>
    </location>
</feature>
<feature type="region of interest" description="Domain III" evidence="1">
    <location>
        <begin position="155"/>
        <end position="203"/>
    </location>
</feature>
<organism>
    <name type="scientific">Escherichia coli (strain SMS-3-5 / SECEC)</name>
    <dbReference type="NCBI Taxonomy" id="439855"/>
    <lineage>
        <taxon>Bacteria</taxon>
        <taxon>Pseudomonadati</taxon>
        <taxon>Pseudomonadota</taxon>
        <taxon>Gammaproteobacteria</taxon>
        <taxon>Enterobacterales</taxon>
        <taxon>Enterobacteriaceae</taxon>
        <taxon>Escherichia</taxon>
    </lineage>
</organism>
<gene>
    <name evidence="1" type="primary">ruvA</name>
    <name type="ordered locus">EcSMS35_1325</name>
</gene>
<protein>
    <recommendedName>
        <fullName evidence="1">Holliday junction branch migration complex subunit RuvA</fullName>
    </recommendedName>
</protein>
<dbReference type="EMBL" id="CP000970">
    <property type="protein sequence ID" value="ACB19454.1"/>
    <property type="molecule type" value="Genomic_DNA"/>
</dbReference>
<dbReference type="RefSeq" id="WP_000580323.1">
    <property type="nucleotide sequence ID" value="NC_010498.1"/>
</dbReference>
<dbReference type="SMR" id="B1LD10"/>
<dbReference type="GeneID" id="75057740"/>
<dbReference type="KEGG" id="ecm:EcSMS35_1325"/>
<dbReference type="HOGENOM" id="CLU_087936_0_0_6"/>
<dbReference type="Proteomes" id="UP000007011">
    <property type="component" value="Chromosome"/>
</dbReference>
<dbReference type="GO" id="GO:0005737">
    <property type="term" value="C:cytoplasm"/>
    <property type="evidence" value="ECO:0007669"/>
    <property type="project" value="UniProtKB-SubCell"/>
</dbReference>
<dbReference type="GO" id="GO:0009379">
    <property type="term" value="C:Holliday junction helicase complex"/>
    <property type="evidence" value="ECO:0007669"/>
    <property type="project" value="InterPro"/>
</dbReference>
<dbReference type="GO" id="GO:0048476">
    <property type="term" value="C:Holliday junction resolvase complex"/>
    <property type="evidence" value="ECO:0007669"/>
    <property type="project" value="UniProtKB-UniRule"/>
</dbReference>
<dbReference type="GO" id="GO:0005524">
    <property type="term" value="F:ATP binding"/>
    <property type="evidence" value="ECO:0007669"/>
    <property type="project" value="InterPro"/>
</dbReference>
<dbReference type="GO" id="GO:0000400">
    <property type="term" value="F:four-way junction DNA binding"/>
    <property type="evidence" value="ECO:0007669"/>
    <property type="project" value="UniProtKB-UniRule"/>
</dbReference>
<dbReference type="GO" id="GO:0009378">
    <property type="term" value="F:four-way junction helicase activity"/>
    <property type="evidence" value="ECO:0007669"/>
    <property type="project" value="InterPro"/>
</dbReference>
<dbReference type="GO" id="GO:0006310">
    <property type="term" value="P:DNA recombination"/>
    <property type="evidence" value="ECO:0007669"/>
    <property type="project" value="UniProtKB-UniRule"/>
</dbReference>
<dbReference type="GO" id="GO:0006281">
    <property type="term" value="P:DNA repair"/>
    <property type="evidence" value="ECO:0007669"/>
    <property type="project" value="UniProtKB-UniRule"/>
</dbReference>
<dbReference type="GO" id="GO:0009432">
    <property type="term" value="P:SOS response"/>
    <property type="evidence" value="ECO:0007669"/>
    <property type="project" value="UniProtKB-UniRule"/>
</dbReference>
<dbReference type="CDD" id="cd14332">
    <property type="entry name" value="UBA_RuvA_C"/>
    <property type="match status" value="1"/>
</dbReference>
<dbReference type="FunFam" id="1.10.150.20:FF:000012">
    <property type="entry name" value="Holliday junction ATP-dependent DNA helicase RuvA"/>
    <property type="match status" value="1"/>
</dbReference>
<dbReference type="FunFam" id="1.10.8.10:FF:000008">
    <property type="entry name" value="Holliday junction ATP-dependent DNA helicase RuvA"/>
    <property type="match status" value="1"/>
</dbReference>
<dbReference type="FunFam" id="2.40.50.140:FF:000083">
    <property type="entry name" value="Holliday junction ATP-dependent DNA helicase RuvA"/>
    <property type="match status" value="1"/>
</dbReference>
<dbReference type="Gene3D" id="1.10.150.20">
    <property type="entry name" value="5' to 3' exonuclease, C-terminal subdomain"/>
    <property type="match status" value="1"/>
</dbReference>
<dbReference type="Gene3D" id="1.10.8.10">
    <property type="entry name" value="DNA helicase RuvA subunit, C-terminal domain"/>
    <property type="match status" value="1"/>
</dbReference>
<dbReference type="Gene3D" id="2.40.50.140">
    <property type="entry name" value="Nucleic acid-binding proteins"/>
    <property type="match status" value="1"/>
</dbReference>
<dbReference type="HAMAP" id="MF_00031">
    <property type="entry name" value="DNA_HJ_migration_RuvA"/>
    <property type="match status" value="1"/>
</dbReference>
<dbReference type="InterPro" id="IPR013849">
    <property type="entry name" value="DNA_helicase_Holl-junc_RuvA_I"/>
</dbReference>
<dbReference type="InterPro" id="IPR003583">
    <property type="entry name" value="Hlx-hairpin-Hlx_DNA-bd_motif"/>
</dbReference>
<dbReference type="InterPro" id="IPR012340">
    <property type="entry name" value="NA-bd_OB-fold"/>
</dbReference>
<dbReference type="InterPro" id="IPR000085">
    <property type="entry name" value="RuvA"/>
</dbReference>
<dbReference type="InterPro" id="IPR010994">
    <property type="entry name" value="RuvA_2-like"/>
</dbReference>
<dbReference type="InterPro" id="IPR011114">
    <property type="entry name" value="RuvA_C"/>
</dbReference>
<dbReference type="InterPro" id="IPR036267">
    <property type="entry name" value="RuvA_C_sf"/>
</dbReference>
<dbReference type="NCBIfam" id="TIGR00084">
    <property type="entry name" value="ruvA"/>
    <property type="match status" value="1"/>
</dbReference>
<dbReference type="Pfam" id="PF14520">
    <property type="entry name" value="HHH_5"/>
    <property type="match status" value="1"/>
</dbReference>
<dbReference type="Pfam" id="PF07499">
    <property type="entry name" value="RuvA_C"/>
    <property type="match status" value="1"/>
</dbReference>
<dbReference type="Pfam" id="PF01330">
    <property type="entry name" value="RuvA_N"/>
    <property type="match status" value="1"/>
</dbReference>
<dbReference type="SMART" id="SM00278">
    <property type="entry name" value="HhH1"/>
    <property type="match status" value="2"/>
</dbReference>
<dbReference type="SUPFAM" id="SSF46929">
    <property type="entry name" value="DNA helicase RuvA subunit, C-terminal domain"/>
    <property type="match status" value="1"/>
</dbReference>
<dbReference type="SUPFAM" id="SSF50249">
    <property type="entry name" value="Nucleic acid-binding proteins"/>
    <property type="match status" value="1"/>
</dbReference>
<dbReference type="SUPFAM" id="SSF47781">
    <property type="entry name" value="RuvA domain 2-like"/>
    <property type="match status" value="1"/>
</dbReference>
<reference key="1">
    <citation type="journal article" date="2008" name="J. Bacteriol.">
        <title>Insights into the environmental resistance gene pool from the genome sequence of the multidrug-resistant environmental isolate Escherichia coli SMS-3-5.</title>
        <authorList>
            <person name="Fricke W.F."/>
            <person name="Wright M.S."/>
            <person name="Lindell A.H."/>
            <person name="Harkins D.M."/>
            <person name="Baker-Austin C."/>
            <person name="Ravel J."/>
            <person name="Stepanauskas R."/>
        </authorList>
    </citation>
    <scope>NUCLEOTIDE SEQUENCE [LARGE SCALE GENOMIC DNA]</scope>
    <source>
        <strain>SMS-3-5 / SECEC</strain>
    </source>
</reference>
<name>RUVA_ECOSM</name>
<evidence type="ECO:0000255" key="1">
    <source>
        <dbReference type="HAMAP-Rule" id="MF_00031"/>
    </source>
</evidence>
<keyword id="KW-0963">Cytoplasm</keyword>
<keyword id="KW-0227">DNA damage</keyword>
<keyword id="KW-0233">DNA recombination</keyword>
<keyword id="KW-0234">DNA repair</keyword>
<keyword id="KW-0238">DNA-binding</keyword>
<keyword id="KW-0742">SOS response</keyword>
<proteinExistence type="inferred from homology"/>
<comment type="function">
    <text evidence="1">The RuvA-RuvB-RuvC complex processes Holliday junction (HJ) DNA during genetic recombination and DNA repair, while the RuvA-RuvB complex plays an important role in the rescue of blocked DNA replication forks via replication fork reversal (RFR). RuvA specifically binds to HJ cruciform DNA, conferring on it an open structure. The RuvB hexamer acts as an ATP-dependent pump, pulling dsDNA into and through the RuvAB complex. HJ branch migration allows RuvC to scan DNA until it finds its consensus sequence, where it cleaves and resolves the cruciform DNA.</text>
</comment>
<comment type="subunit">
    <text evidence="1">Homotetramer. Forms an RuvA(8)-RuvB(12)-Holliday junction (HJ) complex. HJ DNA is sandwiched between 2 RuvA tetramers; dsDNA enters through RuvA and exits via RuvB. An RuvB hexamer assembles on each DNA strand where it exits the tetramer. Each RuvB hexamer is contacted by two RuvA subunits (via domain III) on 2 adjacent RuvB subunits; this complex drives branch migration. In the full resolvosome a probable DNA-RuvA(4)-RuvB(12)-RuvC(2) complex forms which resolves the HJ.</text>
</comment>
<comment type="subcellular location">
    <subcellularLocation>
        <location evidence="1">Cytoplasm</location>
    </subcellularLocation>
</comment>
<comment type="domain">
    <text evidence="1">Has three domains with a flexible linker between the domains II and III and assumes an 'L' shape. Domain III is highly mobile and contacts RuvB.</text>
</comment>
<comment type="similarity">
    <text evidence="1">Belongs to the RuvA family.</text>
</comment>